<feature type="chain" id="PRO_1000006263" description="Serine hydroxymethyltransferase">
    <location>
        <begin position="1"/>
        <end position="416"/>
    </location>
</feature>
<feature type="binding site" evidence="1">
    <location>
        <position position="118"/>
    </location>
    <ligand>
        <name>(6S)-5,6,7,8-tetrahydrofolate</name>
        <dbReference type="ChEBI" id="CHEBI:57453"/>
    </ligand>
</feature>
<feature type="binding site" evidence="1">
    <location>
        <begin position="122"/>
        <end position="124"/>
    </location>
    <ligand>
        <name>(6S)-5,6,7,8-tetrahydrofolate</name>
        <dbReference type="ChEBI" id="CHEBI:57453"/>
    </ligand>
</feature>
<feature type="binding site" evidence="1">
    <location>
        <position position="242"/>
    </location>
    <ligand>
        <name>(6S)-5,6,7,8-tetrahydrofolate</name>
        <dbReference type="ChEBI" id="CHEBI:57453"/>
    </ligand>
</feature>
<feature type="site" description="Plays an important role in substrate specificity" evidence="1">
    <location>
        <position position="225"/>
    </location>
</feature>
<feature type="modified residue" description="N6-(pyridoxal phosphate)lysine" evidence="1">
    <location>
        <position position="226"/>
    </location>
</feature>
<name>GLYA_HELPH</name>
<gene>
    <name evidence="1" type="primary">glyA</name>
    <name type="ordered locus">HPAG1_0180</name>
</gene>
<proteinExistence type="inferred from homology"/>
<accession>Q1CUX5</accession>
<protein>
    <recommendedName>
        <fullName evidence="1">Serine hydroxymethyltransferase</fullName>
        <shortName evidence="1">SHMT</shortName>
        <shortName evidence="1">Serine methylase</shortName>
        <ecNumber evidence="1">2.1.2.1</ecNumber>
    </recommendedName>
</protein>
<sequence length="416" mass="45726">MAYFLEQSDSEIFELIFEEYKRQNEHLEMIASENYTFPSVMEAMGSILTNKYAEGYPNKRYYGGCEVVDKIESLAIERAKKLFNCQFANVQAHSGSQANNAVYHALLKPYDKILGMDLSCGGHLTHGAKVSLTGKHYQSFSYGVNLDGYIDYEEALKIAQSVKPEIIVCGFSAYPREIDFKKFREIADEVGALLLGDIAHVAGLVVTGEHAHPFPHCHVVSSTTHKTLRGPRGGLILTNDEEIAAKIDKAIFPGTQGGPLMHVIAAKAVGFKENLKPEFKAYAKLVKSNMQVLAKALKEKNHKLVSGGTSNHLLLMDFLDKPYSGKDADIALGNAGITVNKNTIPGETRNPFVTSGIRIGSAALSARGMGAKEFEIIGNKISDILNDINNVSLQLHVKEELKAMANQFPVYQQPIF</sequence>
<comment type="function">
    <text evidence="1">Catalyzes the reversible interconversion of serine and glycine with tetrahydrofolate (THF) serving as the one-carbon carrier. This reaction serves as the major source of one-carbon groups required for the biosynthesis of purines, thymidylate, methionine, and other important biomolecules. Also exhibits THF-independent aldolase activity toward beta-hydroxyamino acids, producing glycine and aldehydes, via a retro-aldol mechanism.</text>
</comment>
<comment type="catalytic activity">
    <reaction evidence="1">
        <text>(6R)-5,10-methylene-5,6,7,8-tetrahydrofolate + glycine + H2O = (6S)-5,6,7,8-tetrahydrofolate + L-serine</text>
        <dbReference type="Rhea" id="RHEA:15481"/>
        <dbReference type="ChEBI" id="CHEBI:15377"/>
        <dbReference type="ChEBI" id="CHEBI:15636"/>
        <dbReference type="ChEBI" id="CHEBI:33384"/>
        <dbReference type="ChEBI" id="CHEBI:57305"/>
        <dbReference type="ChEBI" id="CHEBI:57453"/>
        <dbReference type="EC" id="2.1.2.1"/>
    </reaction>
</comment>
<comment type="cofactor">
    <cofactor evidence="1">
        <name>pyridoxal 5'-phosphate</name>
        <dbReference type="ChEBI" id="CHEBI:597326"/>
    </cofactor>
</comment>
<comment type="pathway">
    <text evidence="1">One-carbon metabolism; tetrahydrofolate interconversion.</text>
</comment>
<comment type="pathway">
    <text evidence="1">Amino-acid biosynthesis; glycine biosynthesis; glycine from L-serine: step 1/1.</text>
</comment>
<comment type="subunit">
    <text evidence="1">Homodimer.</text>
</comment>
<comment type="subcellular location">
    <subcellularLocation>
        <location evidence="1">Cytoplasm</location>
    </subcellularLocation>
</comment>
<comment type="similarity">
    <text evidence="1">Belongs to the SHMT family.</text>
</comment>
<reference key="1">
    <citation type="journal article" date="2006" name="Proc. Natl. Acad. Sci. U.S.A.">
        <title>The complete genome sequence of a chronic atrophic gastritis Helicobacter pylori strain: evolution during disease progression.</title>
        <authorList>
            <person name="Oh J.D."/>
            <person name="Kling-Baeckhed H."/>
            <person name="Giannakis M."/>
            <person name="Xu J."/>
            <person name="Fulton R.S."/>
            <person name="Fulton L.A."/>
            <person name="Cordum H.S."/>
            <person name="Wang C."/>
            <person name="Elliott G."/>
            <person name="Edwards J."/>
            <person name="Mardis E.R."/>
            <person name="Engstrand L.G."/>
            <person name="Gordon J.I."/>
        </authorList>
    </citation>
    <scope>NUCLEOTIDE SEQUENCE [LARGE SCALE GENOMIC DNA]</scope>
    <source>
        <strain>HPAG1</strain>
    </source>
</reference>
<evidence type="ECO:0000255" key="1">
    <source>
        <dbReference type="HAMAP-Rule" id="MF_00051"/>
    </source>
</evidence>
<keyword id="KW-0028">Amino-acid biosynthesis</keyword>
<keyword id="KW-0963">Cytoplasm</keyword>
<keyword id="KW-0554">One-carbon metabolism</keyword>
<keyword id="KW-0663">Pyridoxal phosphate</keyword>
<keyword id="KW-0808">Transferase</keyword>
<dbReference type="EC" id="2.1.2.1" evidence="1"/>
<dbReference type="EMBL" id="CP000241">
    <property type="protein sequence ID" value="ABF84247.1"/>
    <property type="molecule type" value="Genomic_DNA"/>
</dbReference>
<dbReference type="RefSeq" id="WP_000323034.1">
    <property type="nucleotide sequence ID" value="NC_008086.1"/>
</dbReference>
<dbReference type="SMR" id="Q1CUX5"/>
<dbReference type="KEGG" id="hpa:HPAG1_0180"/>
<dbReference type="HOGENOM" id="CLU_022477_2_1_7"/>
<dbReference type="UniPathway" id="UPA00193"/>
<dbReference type="UniPathway" id="UPA00288">
    <property type="reaction ID" value="UER01023"/>
</dbReference>
<dbReference type="GO" id="GO:0005829">
    <property type="term" value="C:cytosol"/>
    <property type="evidence" value="ECO:0007669"/>
    <property type="project" value="TreeGrafter"/>
</dbReference>
<dbReference type="GO" id="GO:0004372">
    <property type="term" value="F:glycine hydroxymethyltransferase activity"/>
    <property type="evidence" value="ECO:0007669"/>
    <property type="project" value="UniProtKB-UniRule"/>
</dbReference>
<dbReference type="GO" id="GO:0030170">
    <property type="term" value="F:pyridoxal phosphate binding"/>
    <property type="evidence" value="ECO:0007669"/>
    <property type="project" value="UniProtKB-UniRule"/>
</dbReference>
<dbReference type="GO" id="GO:0019264">
    <property type="term" value="P:glycine biosynthetic process from serine"/>
    <property type="evidence" value="ECO:0007669"/>
    <property type="project" value="UniProtKB-UniRule"/>
</dbReference>
<dbReference type="GO" id="GO:0035999">
    <property type="term" value="P:tetrahydrofolate interconversion"/>
    <property type="evidence" value="ECO:0007669"/>
    <property type="project" value="UniProtKB-UniRule"/>
</dbReference>
<dbReference type="CDD" id="cd00378">
    <property type="entry name" value="SHMT"/>
    <property type="match status" value="1"/>
</dbReference>
<dbReference type="FunFam" id="3.40.640.10:FF:000001">
    <property type="entry name" value="Serine hydroxymethyltransferase"/>
    <property type="match status" value="1"/>
</dbReference>
<dbReference type="Gene3D" id="3.90.1150.10">
    <property type="entry name" value="Aspartate Aminotransferase, domain 1"/>
    <property type="match status" value="1"/>
</dbReference>
<dbReference type="Gene3D" id="3.40.640.10">
    <property type="entry name" value="Type I PLP-dependent aspartate aminotransferase-like (Major domain)"/>
    <property type="match status" value="1"/>
</dbReference>
<dbReference type="HAMAP" id="MF_00051">
    <property type="entry name" value="SHMT"/>
    <property type="match status" value="1"/>
</dbReference>
<dbReference type="InterPro" id="IPR015424">
    <property type="entry name" value="PyrdxlP-dep_Trfase"/>
</dbReference>
<dbReference type="InterPro" id="IPR015421">
    <property type="entry name" value="PyrdxlP-dep_Trfase_major"/>
</dbReference>
<dbReference type="InterPro" id="IPR015422">
    <property type="entry name" value="PyrdxlP-dep_Trfase_small"/>
</dbReference>
<dbReference type="InterPro" id="IPR001085">
    <property type="entry name" value="Ser_HO-MeTrfase"/>
</dbReference>
<dbReference type="InterPro" id="IPR049943">
    <property type="entry name" value="Ser_HO-MeTrfase-like"/>
</dbReference>
<dbReference type="InterPro" id="IPR019798">
    <property type="entry name" value="Ser_HO-MeTrfase_PLP_BS"/>
</dbReference>
<dbReference type="InterPro" id="IPR039429">
    <property type="entry name" value="SHMT-like_dom"/>
</dbReference>
<dbReference type="NCBIfam" id="NF000586">
    <property type="entry name" value="PRK00011.1"/>
    <property type="match status" value="1"/>
</dbReference>
<dbReference type="PANTHER" id="PTHR11680">
    <property type="entry name" value="SERINE HYDROXYMETHYLTRANSFERASE"/>
    <property type="match status" value="1"/>
</dbReference>
<dbReference type="PANTHER" id="PTHR11680:SF50">
    <property type="entry name" value="SERINE HYDROXYMETHYLTRANSFERASE"/>
    <property type="match status" value="1"/>
</dbReference>
<dbReference type="Pfam" id="PF00464">
    <property type="entry name" value="SHMT"/>
    <property type="match status" value="1"/>
</dbReference>
<dbReference type="PIRSF" id="PIRSF000412">
    <property type="entry name" value="SHMT"/>
    <property type="match status" value="1"/>
</dbReference>
<dbReference type="SUPFAM" id="SSF53383">
    <property type="entry name" value="PLP-dependent transferases"/>
    <property type="match status" value="1"/>
</dbReference>
<dbReference type="PROSITE" id="PS00096">
    <property type="entry name" value="SHMT"/>
    <property type="match status" value="1"/>
</dbReference>
<organism>
    <name type="scientific">Helicobacter pylori (strain HPAG1)</name>
    <dbReference type="NCBI Taxonomy" id="357544"/>
    <lineage>
        <taxon>Bacteria</taxon>
        <taxon>Pseudomonadati</taxon>
        <taxon>Campylobacterota</taxon>
        <taxon>Epsilonproteobacteria</taxon>
        <taxon>Campylobacterales</taxon>
        <taxon>Helicobacteraceae</taxon>
        <taxon>Helicobacter</taxon>
    </lineage>
</organism>